<protein>
    <recommendedName>
        <fullName evidence="1">DNA ligase</fullName>
        <ecNumber evidence="1">6.5.1.2</ecNumber>
    </recommendedName>
    <alternativeName>
        <fullName evidence="1">Polydeoxyribonucleotide synthase [NAD(+)]</fullName>
    </alternativeName>
</protein>
<gene>
    <name evidence="1" type="primary">ligA</name>
    <name type="ordered locus">Lferr_0903</name>
</gene>
<keyword id="KW-0227">DNA damage</keyword>
<keyword id="KW-0234">DNA repair</keyword>
<keyword id="KW-0235">DNA replication</keyword>
<keyword id="KW-0436">Ligase</keyword>
<keyword id="KW-0460">Magnesium</keyword>
<keyword id="KW-0464">Manganese</keyword>
<keyword id="KW-0479">Metal-binding</keyword>
<keyword id="KW-0520">NAD</keyword>
<keyword id="KW-0862">Zinc</keyword>
<name>DNLJ_ACIF5</name>
<comment type="function">
    <text evidence="1">DNA ligase that catalyzes the formation of phosphodiester linkages between 5'-phosphoryl and 3'-hydroxyl groups in double-stranded DNA using NAD as a coenzyme and as the energy source for the reaction. It is essential for DNA replication and repair of damaged DNA.</text>
</comment>
<comment type="catalytic activity">
    <reaction evidence="1">
        <text>NAD(+) + (deoxyribonucleotide)n-3'-hydroxyl + 5'-phospho-(deoxyribonucleotide)m = (deoxyribonucleotide)n+m + AMP + beta-nicotinamide D-nucleotide.</text>
        <dbReference type="EC" id="6.5.1.2"/>
    </reaction>
</comment>
<comment type="cofactor">
    <cofactor evidence="1">
        <name>Mg(2+)</name>
        <dbReference type="ChEBI" id="CHEBI:18420"/>
    </cofactor>
    <cofactor evidence="1">
        <name>Mn(2+)</name>
        <dbReference type="ChEBI" id="CHEBI:29035"/>
    </cofactor>
</comment>
<comment type="similarity">
    <text evidence="1">Belongs to the NAD-dependent DNA ligase family. LigA subfamily.</text>
</comment>
<accession>B5EP61</accession>
<sequence length="671" mass="73917">MERVNHTDFERIQQLRAELVAANNAYYREDSPTLSDAEYDARLRELRTLEDRNPQWQSADSPTQRVGAAPVEVFGEVHYAIPLTSLDNVFDQDGFSDWLARVQKGLGREDVPLSAEPKFDGLSVNIRYIEGKLVQAGTRGDGQTGEDVTANVRTIRNVPLQLTGKDWPELLEVRGEVVIPVAAFRRLNGERLRAGDNPFANPRNAAAGSLRQLDSSVTAKRPLAYFPWGWGESSVPLGKSHIAVMERLSAWGFEVTSYLRGVHELTECQRYFSEMQKIREGMPFEIDGLVFKVDDLLAREQLGFTARAPRWAIAYKFPAHEERTVVEDILASVGRTGVITPVAVLKPVQVGGVTVSRASLHNQDEVDRKDIRVGDTVLVRRAGDVIPEVVMVIKEERPPATQPWHMPQRCPVCGSEVLRLANESAHRCMGGLYCPAQRMGAIRHFASRRAMDIRGLGEKLVEQLVGHGLVHTVADIYHLDEAALCGLERMASRSAQKLLAEIDRSRHTSLPRFLYALGIRQVGEGTAKSLAIYFGDLDPLMAATPELLQNIPDVGPIVAESVAHFFAQPHNRDVIAALRAAGVQWAVVQPQKGGRFQGMTLVLTGALDNMTREEAKTAIENAGGKVSGSVSAKTSYVVVGKDPGSKAEKAAKLGVKQLTEAQFLAMFSEKE</sequence>
<evidence type="ECO:0000255" key="1">
    <source>
        <dbReference type="HAMAP-Rule" id="MF_01588"/>
    </source>
</evidence>
<dbReference type="EC" id="6.5.1.2" evidence="1"/>
<dbReference type="EMBL" id="CP001132">
    <property type="protein sequence ID" value="ACH83152.1"/>
    <property type="molecule type" value="Genomic_DNA"/>
</dbReference>
<dbReference type="RefSeq" id="WP_012536336.1">
    <property type="nucleotide sequence ID" value="NC_011206.1"/>
</dbReference>
<dbReference type="SMR" id="B5EP61"/>
<dbReference type="GeneID" id="65280102"/>
<dbReference type="KEGG" id="afe:Lferr_0903"/>
<dbReference type="eggNOG" id="COG0272">
    <property type="taxonomic scope" value="Bacteria"/>
</dbReference>
<dbReference type="HOGENOM" id="CLU_007764_2_1_6"/>
<dbReference type="GO" id="GO:0005829">
    <property type="term" value="C:cytosol"/>
    <property type="evidence" value="ECO:0007669"/>
    <property type="project" value="TreeGrafter"/>
</dbReference>
<dbReference type="GO" id="GO:0003677">
    <property type="term" value="F:DNA binding"/>
    <property type="evidence" value="ECO:0007669"/>
    <property type="project" value="InterPro"/>
</dbReference>
<dbReference type="GO" id="GO:0003911">
    <property type="term" value="F:DNA ligase (NAD+) activity"/>
    <property type="evidence" value="ECO:0007669"/>
    <property type="project" value="UniProtKB-UniRule"/>
</dbReference>
<dbReference type="GO" id="GO:0046872">
    <property type="term" value="F:metal ion binding"/>
    <property type="evidence" value="ECO:0007669"/>
    <property type="project" value="UniProtKB-KW"/>
</dbReference>
<dbReference type="GO" id="GO:0006281">
    <property type="term" value="P:DNA repair"/>
    <property type="evidence" value="ECO:0007669"/>
    <property type="project" value="UniProtKB-KW"/>
</dbReference>
<dbReference type="GO" id="GO:0006260">
    <property type="term" value="P:DNA replication"/>
    <property type="evidence" value="ECO:0007669"/>
    <property type="project" value="UniProtKB-KW"/>
</dbReference>
<dbReference type="CDD" id="cd17748">
    <property type="entry name" value="BRCT_DNA_ligase_like"/>
    <property type="match status" value="1"/>
</dbReference>
<dbReference type="CDD" id="cd00114">
    <property type="entry name" value="LIGANc"/>
    <property type="match status" value="1"/>
</dbReference>
<dbReference type="FunFam" id="1.10.150.20:FF:000006">
    <property type="entry name" value="DNA ligase"/>
    <property type="match status" value="1"/>
</dbReference>
<dbReference type="FunFam" id="1.10.150.20:FF:000007">
    <property type="entry name" value="DNA ligase"/>
    <property type="match status" value="1"/>
</dbReference>
<dbReference type="FunFam" id="2.40.50.140:FF:000012">
    <property type="entry name" value="DNA ligase"/>
    <property type="match status" value="1"/>
</dbReference>
<dbReference type="FunFam" id="3.30.470.30:FF:000001">
    <property type="entry name" value="DNA ligase"/>
    <property type="match status" value="1"/>
</dbReference>
<dbReference type="Gene3D" id="6.20.10.30">
    <property type="match status" value="1"/>
</dbReference>
<dbReference type="Gene3D" id="1.10.150.20">
    <property type="entry name" value="5' to 3' exonuclease, C-terminal subdomain"/>
    <property type="match status" value="2"/>
</dbReference>
<dbReference type="Gene3D" id="3.40.50.10190">
    <property type="entry name" value="BRCT domain"/>
    <property type="match status" value="1"/>
</dbReference>
<dbReference type="Gene3D" id="3.30.470.30">
    <property type="entry name" value="DNA ligase/mRNA capping enzyme"/>
    <property type="match status" value="1"/>
</dbReference>
<dbReference type="Gene3D" id="1.10.287.610">
    <property type="entry name" value="Helix hairpin bin"/>
    <property type="match status" value="1"/>
</dbReference>
<dbReference type="Gene3D" id="2.40.50.140">
    <property type="entry name" value="Nucleic acid-binding proteins"/>
    <property type="match status" value="1"/>
</dbReference>
<dbReference type="HAMAP" id="MF_01588">
    <property type="entry name" value="DNA_ligase_A"/>
    <property type="match status" value="1"/>
</dbReference>
<dbReference type="InterPro" id="IPR001357">
    <property type="entry name" value="BRCT_dom"/>
</dbReference>
<dbReference type="InterPro" id="IPR036420">
    <property type="entry name" value="BRCT_dom_sf"/>
</dbReference>
<dbReference type="InterPro" id="IPR041663">
    <property type="entry name" value="DisA/LigA_HHH"/>
</dbReference>
<dbReference type="InterPro" id="IPR001679">
    <property type="entry name" value="DNA_ligase"/>
</dbReference>
<dbReference type="InterPro" id="IPR018239">
    <property type="entry name" value="DNA_ligase_AS"/>
</dbReference>
<dbReference type="InterPro" id="IPR033136">
    <property type="entry name" value="DNA_ligase_CS"/>
</dbReference>
<dbReference type="InterPro" id="IPR013839">
    <property type="entry name" value="DNAligase_adenylation"/>
</dbReference>
<dbReference type="InterPro" id="IPR013840">
    <property type="entry name" value="DNAligase_N"/>
</dbReference>
<dbReference type="InterPro" id="IPR003583">
    <property type="entry name" value="Hlx-hairpin-Hlx_DNA-bd_motif"/>
</dbReference>
<dbReference type="InterPro" id="IPR012340">
    <property type="entry name" value="NA-bd_OB-fold"/>
</dbReference>
<dbReference type="InterPro" id="IPR004150">
    <property type="entry name" value="NAD_DNA_ligase_OB"/>
</dbReference>
<dbReference type="InterPro" id="IPR010994">
    <property type="entry name" value="RuvA_2-like"/>
</dbReference>
<dbReference type="InterPro" id="IPR004149">
    <property type="entry name" value="Znf_DNAligase_C4"/>
</dbReference>
<dbReference type="NCBIfam" id="TIGR00575">
    <property type="entry name" value="dnlj"/>
    <property type="match status" value="1"/>
</dbReference>
<dbReference type="NCBIfam" id="NF005932">
    <property type="entry name" value="PRK07956.1"/>
    <property type="match status" value="1"/>
</dbReference>
<dbReference type="PANTHER" id="PTHR23389">
    <property type="entry name" value="CHROMOSOME TRANSMISSION FIDELITY FACTOR 18"/>
    <property type="match status" value="1"/>
</dbReference>
<dbReference type="PANTHER" id="PTHR23389:SF9">
    <property type="entry name" value="DNA LIGASE"/>
    <property type="match status" value="1"/>
</dbReference>
<dbReference type="Pfam" id="PF00533">
    <property type="entry name" value="BRCT"/>
    <property type="match status" value="1"/>
</dbReference>
<dbReference type="Pfam" id="PF01653">
    <property type="entry name" value="DNA_ligase_aden"/>
    <property type="match status" value="1"/>
</dbReference>
<dbReference type="Pfam" id="PF03120">
    <property type="entry name" value="DNA_ligase_OB"/>
    <property type="match status" value="1"/>
</dbReference>
<dbReference type="Pfam" id="PF03119">
    <property type="entry name" value="DNA_ligase_ZBD"/>
    <property type="match status" value="1"/>
</dbReference>
<dbReference type="Pfam" id="PF12826">
    <property type="entry name" value="HHH_2"/>
    <property type="match status" value="1"/>
</dbReference>
<dbReference type="Pfam" id="PF14520">
    <property type="entry name" value="HHH_5"/>
    <property type="match status" value="1"/>
</dbReference>
<dbReference type="Pfam" id="PF22745">
    <property type="entry name" value="Nlig-Ia"/>
    <property type="match status" value="1"/>
</dbReference>
<dbReference type="PIRSF" id="PIRSF001604">
    <property type="entry name" value="LigA"/>
    <property type="match status" value="1"/>
</dbReference>
<dbReference type="SMART" id="SM00292">
    <property type="entry name" value="BRCT"/>
    <property type="match status" value="1"/>
</dbReference>
<dbReference type="SMART" id="SM00278">
    <property type="entry name" value="HhH1"/>
    <property type="match status" value="4"/>
</dbReference>
<dbReference type="SMART" id="SM00532">
    <property type="entry name" value="LIGANc"/>
    <property type="match status" value="1"/>
</dbReference>
<dbReference type="SUPFAM" id="SSF52113">
    <property type="entry name" value="BRCT domain"/>
    <property type="match status" value="1"/>
</dbReference>
<dbReference type="SUPFAM" id="SSF56091">
    <property type="entry name" value="DNA ligase/mRNA capping enzyme, catalytic domain"/>
    <property type="match status" value="1"/>
</dbReference>
<dbReference type="SUPFAM" id="SSF50249">
    <property type="entry name" value="Nucleic acid-binding proteins"/>
    <property type="match status" value="1"/>
</dbReference>
<dbReference type="SUPFAM" id="SSF47781">
    <property type="entry name" value="RuvA domain 2-like"/>
    <property type="match status" value="1"/>
</dbReference>
<dbReference type="PROSITE" id="PS50172">
    <property type="entry name" value="BRCT"/>
    <property type="match status" value="1"/>
</dbReference>
<dbReference type="PROSITE" id="PS01055">
    <property type="entry name" value="DNA_LIGASE_N1"/>
    <property type="match status" value="1"/>
</dbReference>
<dbReference type="PROSITE" id="PS01056">
    <property type="entry name" value="DNA_LIGASE_N2"/>
    <property type="match status" value="1"/>
</dbReference>
<proteinExistence type="inferred from homology"/>
<organism>
    <name type="scientific">Acidithiobacillus ferrooxidans (strain ATCC 53993 / BNL-5-31)</name>
    <name type="common">Leptospirillum ferrooxidans (ATCC 53993)</name>
    <dbReference type="NCBI Taxonomy" id="380394"/>
    <lineage>
        <taxon>Bacteria</taxon>
        <taxon>Pseudomonadati</taxon>
        <taxon>Pseudomonadota</taxon>
        <taxon>Acidithiobacillia</taxon>
        <taxon>Acidithiobacillales</taxon>
        <taxon>Acidithiobacillaceae</taxon>
        <taxon>Acidithiobacillus</taxon>
    </lineage>
</organism>
<feature type="chain" id="PRO_0000380281" description="DNA ligase">
    <location>
        <begin position="1"/>
        <end position="671"/>
    </location>
</feature>
<feature type="domain" description="BRCT" evidence="1">
    <location>
        <begin position="591"/>
        <end position="671"/>
    </location>
</feature>
<feature type="active site" description="N6-AMP-lysine intermediate" evidence="1">
    <location>
        <position position="118"/>
    </location>
</feature>
<feature type="binding site" evidence="1">
    <location>
        <begin position="36"/>
        <end position="40"/>
    </location>
    <ligand>
        <name>NAD(+)</name>
        <dbReference type="ChEBI" id="CHEBI:57540"/>
    </ligand>
</feature>
<feature type="binding site" evidence="1">
    <location>
        <begin position="85"/>
        <end position="86"/>
    </location>
    <ligand>
        <name>NAD(+)</name>
        <dbReference type="ChEBI" id="CHEBI:57540"/>
    </ligand>
</feature>
<feature type="binding site" evidence="1">
    <location>
        <position position="116"/>
    </location>
    <ligand>
        <name>NAD(+)</name>
        <dbReference type="ChEBI" id="CHEBI:57540"/>
    </ligand>
</feature>
<feature type="binding site" evidence="1">
    <location>
        <position position="139"/>
    </location>
    <ligand>
        <name>NAD(+)</name>
        <dbReference type="ChEBI" id="CHEBI:57540"/>
    </ligand>
</feature>
<feature type="binding site" evidence="1">
    <location>
        <position position="176"/>
    </location>
    <ligand>
        <name>NAD(+)</name>
        <dbReference type="ChEBI" id="CHEBI:57540"/>
    </ligand>
</feature>
<feature type="binding site" evidence="1">
    <location>
        <position position="292"/>
    </location>
    <ligand>
        <name>NAD(+)</name>
        <dbReference type="ChEBI" id="CHEBI:57540"/>
    </ligand>
</feature>
<feature type="binding site" evidence="1">
    <location>
        <position position="316"/>
    </location>
    <ligand>
        <name>NAD(+)</name>
        <dbReference type="ChEBI" id="CHEBI:57540"/>
    </ligand>
</feature>
<feature type="binding site" evidence="1">
    <location>
        <position position="410"/>
    </location>
    <ligand>
        <name>Zn(2+)</name>
        <dbReference type="ChEBI" id="CHEBI:29105"/>
    </ligand>
</feature>
<feature type="binding site" evidence="1">
    <location>
        <position position="413"/>
    </location>
    <ligand>
        <name>Zn(2+)</name>
        <dbReference type="ChEBI" id="CHEBI:29105"/>
    </ligand>
</feature>
<feature type="binding site" evidence="1">
    <location>
        <position position="428"/>
    </location>
    <ligand>
        <name>Zn(2+)</name>
        <dbReference type="ChEBI" id="CHEBI:29105"/>
    </ligand>
</feature>
<feature type="binding site" evidence="1">
    <location>
        <position position="434"/>
    </location>
    <ligand>
        <name>Zn(2+)</name>
        <dbReference type="ChEBI" id="CHEBI:29105"/>
    </ligand>
</feature>
<reference key="1">
    <citation type="submission" date="2008-08" db="EMBL/GenBank/DDBJ databases">
        <title>Complete sequence of Acidithiobacillus ferrooxidans ATCC 53993.</title>
        <authorList>
            <person name="Lucas S."/>
            <person name="Copeland A."/>
            <person name="Lapidus A."/>
            <person name="Glavina del Rio T."/>
            <person name="Dalin E."/>
            <person name="Tice H."/>
            <person name="Bruce D."/>
            <person name="Goodwin L."/>
            <person name="Pitluck S."/>
            <person name="Sims D."/>
            <person name="Brettin T."/>
            <person name="Detter J.C."/>
            <person name="Han C."/>
            <person name="Kuske C.R."/>
            <person name="Larimer F."/>
            <person name="Land M."/>
            <person name="Hauser L."/>
            <person name="Kyrpides N."/>
            <person name="Lykidis A."/>
            <person name="Borole A.P."/>
        </authorList>
    </citation>
    <scope>NUCLEOTIDE SEQUENCE [LARGE SCALE GENOMIC DNA]</scope>
    <source>
        <strain>ATCC 53993 / BNL-5-31</strain>
    </source>
</reference>